<dbReference type="EMBL" id="AF017777">
    <property type="protein sequence ID" value="AAC28400.1"/>
    <property type="status" value="ALT_SEQ"/>
    <property type="molecule type" value="Genomic_DNA"/>
</dbReference>
<dbReference type="EMBL" id="AE014298">
    <property type="protein sequence ID" value="AAF50831.4"/>
    <property type="molecule type" value="Genomic_DNA"/>
</dbReference>
<dbReference type="EMBL" id="AF184227">
    <property type="protein sequence ID" value="AAD55738.1"/>
    <property type="molecule type" value="mRNA"/>
</dbReference>
<dbReference type="PIR" id="T08424">
    <property type="entry name" value="T08424"/>
</dbReference>
<dbReference type="RefSeq" id="NP_542443.4">
    <property type="nucleotide sequence ID" value="NM_080712.7"/>
</dbReference>
<dbReference type="RefSeq" id="NP_728415.4">
    <property type="nucleotide sequence ID" value="NM_167744.4"/>
</dbReference>
<dbReference type="SMR" id="Q9U6L4"/>
<dbReference type="FunCoup" id="Q9U6L4">
    <property type="interactions" value="327"/>
</dbReference>
<dbReference type="STRING" id="7227.FBpp0302935"/>
<dbReference type="TCDB" id="1.A.48.1.1">
    <property type="family name" value="the anion channel tweety (tweety) family"/>
</dbReference>
<dbReference type="GlyCosmos" id="Q9U6L4">
    <property type="glycosylation" value="6 sites, No reported glycans"/>
</dbReference>
<dbReference type="GlyGen" id="Q9U6L4">
    <property type="glycosylation" value="6 sites"/>
</dbReference>
<dbReference type="PaxDb" id="7227-FBpp0302935"/>
<dbReference type="DNASU" id="33109"/>
<dbReference type="EnsemblMetazoa" id="FBtr0077224">
    <property type="protein sequence ID" value="FBpp0076919"/>
    <property type="gene ID" value="FBgn0015558"/>
</dbReference>
<dbReference type="EnsemblMetazoa" id="FBtr0329901">
    <property type="protein sequence ID" value="FBpp0302935"/>
    <property type="gene ID" value="FBgn0015558"/>
</dbReference>
<dbReference type="GeneID" id="33109"/>
<dbReference type="KEGG" id="dme:Dmel_CG1693"/>
<dbReference type="UCSC" id="CG1693-RA">
    <property type="organism name" value="d. melanogaster"/>
</dbReference>
<dbReference type="AGR" id="FB:FBgn0015558"/>
<dbReference type="CTD" id="33109"/>
<dbReference type="FlyBase" id="FBgn0015558">
    <property type="gene designation" value="tty"/>
</dbReference>
<dbReference type="VEuPathDB" id="VectorBase:FBgn0015558"/>
<dbReference type="eggNOG" id="KOG4433">
    <property type="taxonomic scope" value="Eukaryota"/>
</dbReference>
<dbReference type="GeneTree" id="ENSGT00950000183060"/>
<dbReference type="HOGENOM" id="CLU_012059_0_0_1"/>
<dbReference type="InParanoid" id="Q9U6L4"/>
<dbReference type="OMA" id="HPNKRQQ"/>
<dbReference type="OrthoDB" id="187568at2759"/>
<dbReference type="PhylomeDB" id="Q9U6L4"/>
<dbReference type="Reactome" id="R-DME-2672351">
    <property type="pathway name" value="Stimuli-sensing channels"/>
</dbReference>
<dbReference type="BioGRID-ORCS" id="33109">
    <property type="hits" value="0 hits in 3 CRISPR screens"/>
</dbReference>
<dbReference type="GenomeRNAi" id="33109"/>
<dbReference type="PRO" id="PR:Q9U6L4"/>
<dbReference type="Proteomes" id="UP000000803">
    <property type="component" value="Chromosome X"/>
</dbReference>
<dbReference type="Bgee" id="FBgn0015558">
    <property type="expression patterns" value="Expressed in alpha'/beta' Kenyon cell (Drosophila) in insect head and 180 other cell types or tissues"/>
</dbReference>
<dbReference type="ExpressionAtlas" id="Q9U6L4">
    <property type="expression patterns" value="baseline and differential"/>
</dbReference>
<dbReference type="GO" id="GO:0034707">
    <property type="term" value="C:chloride channel complex"/>
    <property type="evidence" value="ECO:0007669"/>
    <property type="project" value="UniProtKB-KW"/>
</dbReference>
<dbReference type="GO" id="GO:0036020">
    <property type="term" value="C:endolysosome membrane"/>
    <property type="evidence" value="ECO:0000314"/>
    <property type="project" value="FlyBase"/>
</dbReference>
<dbReference type="GO" id="GO:0016020">
    <property type="term" value="C:membrane"/>
    <property type="evidence" value="ECO:0000255"/>
    <property type="project" value="FlyBase"/>
</dbReference>
<dbReference type="GO" id="GO:0005886">
    <property type="term" value="C:plasma membrane"/>
    <property type="evidence" value="ECO:0000250"/>
    <property type="project" value="UniProtKB"/>
</dbReference>
<dbReference type="GO" id="GO:0005254">
    <property type="term" value="F:chloride channel activity"/>
    <property type="evidence" value="ECO:0000250"/>
    <property type="project" value="UniProtKB"/>
</dbReference>
<dbReference type="GO" id="GO:0005229">
    <property type="term" value="F:intracellularly calcium-gated chloride channel activity"/>
    <property type="evidence" value="ECO:0000318"/>
    <property type="project" value="GO_Central"/>
</dbReference>
<dbReference type="GO" id="GO:0072320">
    <property type="term" value="F:volume-sensitive chloride channel activity"/>
    <property type="evidence" value="ECO:0000318"/>
    <property type="project" value="GO_Central"/>
</dbReference>
<dbReference type="GO" id="GO:0006821">
    <property type="term" value="P:chloride transport"/>
    <property type="evidence" value="ECO:0000250"/>
    <property type="project" value="FlyBase"/>
</dbReference>
<dbReference type="GO" id="GO:1901098">
    <property type="term" value="P:positive regulation of autophagosome maturation"/>
    <property type="evidence" value="ECO:0000315"/>
    <property type="project" value="FlyBase"/>
</dbReference>
<dbReference type="CDD" id="cd07912">
    <property type="entry name" value="Tweety_N"/>
    <property type="match status" value="1"/>
</dbReference>
<dbReference type="InterPro" id="IPR006990">
    <property type="entry name" value="Tweety"/>
</dbReference>
<dbReference type="PANTHER" id="PTHR12424:SF8">
    <property type="entry name" value="PROTEIN TWEETY"/>
    <property type="match status" value="1"/>
</dbReference>
<dbReference type="PANTHER" id="PTHR12424">
    <property type="entry name" value="TWEETY-RELATED"/>
    <property type="match status" value="1"/>
</dbReference>
<dbReference type="Pfam" id="PF04906">
    <property type="entry name" value="Tweety"/>
    <property type="match status" value="1"/>
</dbReference>
<keyword id="KW-1003">Cell membrane</keyword>
<keyword id="KW-0868">Chloride</keyword>
<keyword id="KW-0869">Chloride channel</keyword>
<keyword id="KW-0325">Glycoprotein</keyword>
<keyword id="KW-0407">Ion channel</keyword>
<keyword id="KW-0406">Ion transport</keyword>
<keyword id="KW-0472">Membrane</keyword>
<keyword id="KW-1185">Reference proteome</keyword>
<keyword id="KW-0812">Transmembrane</keyword>
<keyword id="KW-1133">Transmembrane helix</keyword>
<keyword id="KW-0813">Transport</keyword>
<comment type="function">
    <text evidence="1">Non-essential protein that probably acts as a chloride channel.</text>
</comment>
<comment type="subcellular location">
    <subcellularLocation>
        <location evidence="1">Cell membrane</location>
        <topology evidence="1">Multi-pass membrane protein</topology>
    </subcellularLocation>
</comment>
<comment type="disruption phenotype">
    <text evidence="4">Flies lacking tty are viable and fertile. Was named 'tweety' after the cartoon character that cannot fly. Indeed, a mutant involving a genomic region that contain tty leads to flies that cannot fly.</text>
</comment>
<comment type="similarity">
    <text evidence="5">Belongs to the tweety family.</text>
</comment>
<comment type="sequence caution" evidence="5">
    <conflict type="erroneous gene model prediction">
        <sequence resource="EMBL-CDS" id="AAC28400"/>
    </conflict>
</comment>
<accession>Q9U6L4</accession>
<accession>O61343</accession>
<accession>Q8IQ48</accession>
<accession>Q9VRG9</accession>
<protein>
    <recommendedName>
        <fullName>Protein tweety</fullName>
        <shortName>Dttyh1</shortName>
    </recommendedName>
</protein>
<name>TTY1_DROME</name>
<proteinExistence type="evidence at transcript level"/>
<reference key="1">
    <citation type="journal article" date="1998" name="Proc. Natl. Acad. Sci. U.S.A.">
        <title>Data transferability from model organisms to human beings: insights from the functional genomics of the flightless region of Drosophila.</title>
        <authorList>
            <person name="Maleszka R."/>
            <person name="de Couet H.G."/>
            <person name="Miklos G.L.G."/>
        </authorList>
    </citation>
    <scope>NUCLEOTIDE SEQUENCE [GENOMIC DNA]</scope>
    <source>
        <strain>Canton-S</strain>
    </source>
</reference>
<reference key="2">
    <citation type="journal article" date="2000" name="Science">
        <title>The genome sequence of Drosophila melanogaster.</title>
        <authorList>
            <person name="Adams M.D."/>
            <person name="Celniker S.E."/>
            <person name="Holt R.A."/>
            <person name="Evans C.A."/>
            <person name="Gocayne J.D."/>
            <person name="Amanatides P.G."/>
            <person name="Scherer S.E."/>
            <person name="Li P.W."/>
            <person name="Hoskins R.A."/>
            <person name="Galle R.F."/>
            <person name="George R.A."/>
            <person name="Lewis S.E."/>
            <person name="Richards S."/>
            <person name="Ashburner M."/>
            <person name="Henderson S.N."/>
            <person name="Sutton G.G."/>
            <person name="Wortman J.R."/>
            <person name="Yandell M.D."/>
            <person name="Zhang Q."/>
            <person name="Chen L.X."/>
            <person name="Brandon R.C."/>
            <person name="Rogers Y.-H.C."/>
            <person name="Blazej R.G."/>
            <person name="Champe M."/>
            <person name="Pfeiffer B.D."/>
            <person name="Wan K.H."/>
            <person name="Doyle C."/>
            <person name="Baxter E.G."/>
            <person name="Helt G."/>
            <person name="Nelson C.R."/>
            <person name="Miklos G.L.G."/>
            <person name="Abril J.F."/>
            <person name="Agbayani A."/>
            <person name="An H.-J."/>
            <person name="Andrews-Pfannkoch C."/>
            <person name="Baldwin D."/>
            <person name="Ballew R.M."/>
            <person name="Basu A."/>
            <person name="Baxendale J."/>
            <person name="Bayraktaroglu L."/>
            <person name="Beasley E.M."/>
            <person name="Beeson K.Y."/>
            <person name="Benos P.V."/>
            <person name="Berman B.P."/>
            <person name="Bhandari D."/>
            <person name="Bolshakov S."/>
            <person name="Borkova D."/>
            <person name="Botchan M.R."/>
            <person name="Bouck J."/>
            <person name="Brokstein P."/>
            <person name="Brottier P."/>
            <person name="Burtis K.C."/>
            <person name="Busam D.A."/>
            <person name="Butler H."/>
            <person name="Cadieu E."/>
            <person name="Center A."/>
            <person name="Chandra I."/>
            <person name="Cherry J.M."/>
            <person name="Cawley S."/>
            <person name="Dahlke C."/>
            <person name="Davenport L.B."/>
            <person name="Davies P."/>
            <person name="de Pablos B."/>
            <person name="Delcher A."/>
            <person name="Deng Z."/>
            <person name="Mays A.D."/>
            <person name="Dew I."/>
            <person name="Dietz S.M."/>
            <person name="Dodson K."/>
            <person name="Doup L.E."/>
            <person name="Downes M."/>
            <person name="Dugan-Rocha S."/>
            <person name="Dunkov B.C."/>
            <person name="Dunn P."/>
            <person name="Durbin K.J."/>
            <person name="Evangelista C.C."/>
            <person name="Ferraz C."/>
            <person name="Ferriera S."/>
            <person name="Fleischmann W."/>
            <person name="Fosler C."/>
            <person name="Gabrielian A.E."/>
            <person name="Garg N.S."/>
            <person name="Gelbart W.M."/>
            <person name="Glasser K."/>
            <person name="Glodek A."/>
            <person name="Gong F."/>
            <person name="Gorrell J.H."/>
            <person name="Gu Z."/>
            <person name="Guan P."/>
            <person name="Harris M."/>
            <person name="Harris N.L."/>
            <person name="Harvey D.A."/>
            <person name="Heiman T.J."/>
            <person name="Hernandez J.R."/>
            <person name="Houck J."/>
            <person name="Hostin D."/>
            <person name="Houston K.A."/>
            <person name="Howland T.J."/>
            <person name="Wei M.-H."/>
            <person name="Ibegwam C."/>
            <person name="Jalali M."/>
            <person name="Kalush F."/>
            <person name="Karpen G.H."/>
            <person name="Ke Z."/>
            <person name="Kennison J.A."/>
            <person name="Ketchum K.A."/>
            <person name="Kimmel B.E."/>
            <person name="Kodira C.D."/>
            <person name="Kraft C.L."/>
            <person name="Kravitz S."/>
            <person name="Kulp D."/>
            <person name="Lai Z."/>
            <person name="Lasko P."/>
            <person name="Lei Y."/>
            <person name="Levitsky A.A."/>
            <person name="Li J.H."/>
            <person name="Li Z."/>
            <person name="Liang Y."/>
            <person name="Lin X."/>
            <person name="Liu X."/>
            <person name="Mattei B."/>
            <person name="McIntosh T.C."/>
            <person name="McLeod M.P."/>
            <person name="McPherson D."/>
            <person name="Merkulov G."/>
            <person name="Milshina N.V."/>
            <person name="Mobarry C."/>
            <person name="Morris J."/>
            <person name="Moshrefi A."/>
            <person name="Mount S.M."/>
            <person name="Moy M."/>
            <person name="Murphy B."/>
            <person name="Murphy L."/>
            <person name="Muzny D.M."/>
            <person name="Nelson D.L."/>
            <person name="Nelson D.R."/>
            <person name="Nelson K.A."/>
            <person name="Nixon K."/>
            <person name="Nusskern D.R."/>
            <person name="Pacleb J.M."/>
            <person name="Palazzolo M."/>
            <person name="Pittman G.S."/>
            <person name="Pan S."/>
            <person name="Pollard J."/>
            <person name="Puri V."/>
            <person name="Reese M.G."/>
            <person name="Reinert K."/>
            <person name="Remington K."/>
            <person name="Saunders R.D.C."/>
            <person name="Scheeler F."/>
            <person name="Shen H."/>
            <person name="Shue B.C."/>
            <person name="Siden-Kiamos I."/>
            <person name="Simpson M."/>
            <person name="Skupski M.P."/>
            <person name="Smith T.J."/>
            <person name="Spier E."/>
            <person name="Spradling A.C."/>
            <person name="Stapleton M."/>
            <person name="Strong R."/>
            <person name="Sun E."/>
            <person name="Svirskas R."/>
            <person name="Tector C."/>
            <person name="Turner R."/>
            <person name="Venter E."/>
            <person name="Wang A.H."/>
            <person name="Wang X."/>
            <person name="Wang Z.-Y."/>
            <person name="Wassarman D.A."/>
            <person name="Weinstock G.M."/>
            <person name="Weissenbach J."/>
            <person name="Williams S.M."/>
            <person name="Woodage T."/>
            <person name="Worley K.C."/>
            <person name="Wu D."/>
            <person name="Yang S."/>
            <person name="Yao Q.A."/>
            <person name="Ye J."/>
            <person name="Yeh R.-F."/>
            <person name="Zaveri J.S."/>
            <person name="Zhan M."/>
            <person name="Zhang G."/>
            <person name="Zhao Q."/>
            <person name="Zheng L."/>
            <person name="Zheng X.H."/>
            <person name="Zhong F.N."/>
            <person name="Zhong W."/>
            <person name="Zhou X."/>
            <person name="Zhu S.C."/>
            <person name="Zhu X."/>
            <person name="Smith H.O."/>
            <person name="Gibbs R.A."/>
            <person name="Myers E.W."/>
            <person name="Rubin G.M."/>
            <person name="Venter J.C."/>
        </authorList>
    </citation>
    <scope>NUCLEOTIDE SEQUENCE [LARGE SCALE GENOMIC DNA]</scope>
    <source>
        <strain>Berkeley</strain>
    </source>
</reference>
<reference key="3">
    <citation type="journal article" date="2002" name="Genome Biol.">
        <title>Annotation of the Drosophila melanogaster euchromatic genome: a systematic review.</title>
        <authorList>
            <person name="Misra S."/>
            <person name="Crosby M.A."/>
            <person name="Mungall C.J."/>
            <person name="Matthews B.B."/>
            <person name="Campbell K.S."/>
            <person name="Hradecky P."/>
            <person name="Huang Y."/>
            <person name="Kaminker J.S."/>
            <person name="Millburn G.H."/>
            <person name="Prochnik S.E."/>
            <person name="Smith C.D."/>
            <person name="Tupy J.L."/>
            <person name="Whitfield E.J."/>
            <person name="Bayraktaroglu L."/>
            <person name="Berman B.P."/>
            <person name="Bettencourt B.R."/>
            <person name="Celniker S.E."/>
            <person name="de Grey A.D.N.J."/>
            <person name="Drysdale R.A."/>
            <person name="Harris N.L."/>
            <person name="Richter J."/>
            <person name="Russo S."/>
            <person name="Schroeder A.J."/>
            <person name="Shu S.Q."/>
            <person name="Stapleton M."/>
            <person name="Yamada C."/>
            <person name="Ashburner M."/>
            <person name="Gelbart W.M."/>
            <person name="Rubin G.M."/>
            <person name="Lewis S.E."/>
        </authorList>
    </citation>
    <scope>GENOME REANNOTATION</scope>
    <source>
        <strain>Berkeley</strain>
    </source>
</reference>
<reference key="4">
    <citation type="journal article" date="2000" name="Science">
        <title>A Drosophila complementary DNA resource.</title>
        <authorList>
            <person name="Rubin G.M."/>
            <person name="Hong L."/>
            <person name="Brokstein P."/>
            <person name="Evans-Holm M."/>
            <person name="Frise E."/>
            <person name="Stapleton M."/>
            <person name="Harvey D.A."/>
        </authorList>
    </citation>
    <scope>NUCLEOTIDE SEQUENCE [LARGE SCALE MRNA]</scope>
    <source>
        <strain>Berkeley</strain>
        <tissue>Embryo</tissue>
    </source>
</reference>
<reference key="5">
    <citation type="journal article" date="1996" name="Proc. Natl. Acad. Sci. U.S.A.">
        <title>The Drosophila melanogaster dodo (dod) gene, conserved in humans, is functionally interchangeable with the ESS1 cell division gene of Saccharomyces cerevisiae.</title>
        <authorList>
            <person name="Maleszka R."/>
            <person name="Hanes S.D."/>
            <person name="Hackett R.L."/>
            <person name="de Couet H.G."/>
            <person name="Miklos G.L.G."/>
        </authorList>
    </citation>
    <scope>DISRUPTION PHENOTYPE</scope>
</reference>
<feature type="chain" id="PRO_0000312256" description="Protein tweety">
    <location>
        <begin position="1"/>
        <end position="970"/>
    </location>
</feature>
<feature type="topological domain" description="Extracellular" evidence="2">
    <location>
        <begin position="1"/>
        <end position="47"/>
    </location>
</feature>
<feature type="transmembrane region" description="Helical; Name=1" evidence="2">
    <location>
        <begin position="48"/>
        <end position="68"/>
    </location>
</feature>
<feature type="topological domain" description="Cytoplasmic" evidence="2">
    <location>
        <begin position="69"/>
        <end position="89"/>
    </location>
</feature>
<feature type="transmembrane region" description="Helical; Name=2" evidence="2">
    <location>
        <begin position="90"/>
        <end position="110"/>
    </location>
</feature>
<feature type="topological domain" description="Extracellular" evidence="2">
    <location>
        <begin position="111"/>
        <end position="219"/>
    </location>
</feature>
<feature type="transmembrane region" description="Helical; Name=3" evidence="2">
    <location>
        <begin position="220"/>
        <end position="240"/>
    </location>
</feature>
<feature type="topological domain" description="Cytoplasmic" evidence="2">
    <location>
        <begin position="241"/>
        <end position="246"/>
    </location>
</feature>
<feature type="transmembrane region" description="Helical; Name=4" evidence="2">
    <location>
        <begin position="247"/>
        <end position="267"/>
    </location>
</feature>
<feature type="topological domain" description="Extracellular" evidence="2">
    <location>
        <begin position="268"/>
        <end position="395"/>
    </location>
</feature>
<feature type="transmembrane region" description="Helical; Name=5" evidence="2">
    <location>
        <begin position="396"/>
        <end position="416"/>
    </location>
</feature>
<feature type="topological domain" description="Cytoplasmic" evidence="2">
    <location>
        <begin position="417"/>
        <end position="970"/>
    </location>
</feature>
<feature type="region of interest" description="Disordered" evidence="3">
    <location>
        <begin position="532"/>
        <end position="587"/>
    </location>
</feature>
<feature type="region of interest" description="Disordered" evidence="3">
    <location>
        <begin position="677"/>
        <end position="763"/>
    </location>
</feature>
<feature type="region of interest" description="Disordered" evidence="3">
    <location>
        <begin position="849"/>
        <end position="970"/>
    </location>
</feature>
<feature type="compositionally biased region" description="Low complexity" evidence="3">
    <location>
        <begin position="532"/>
        <end position="571"/>
    </location>
</feature>
<feature type="compositionally biased region" description="Basic residues" evidence="3">
    <location>
        <begin position="572"/>
        <end position="587"/>
    </location>
</feature>
<feature type="compositionally biased region" description="Low complexity" evidence="3">
    <location>
        <begin position="689"/>
        <end position="700"/>
    </location>
</feature>
<feature type="compositionally biased region" description="Low complexity" evidence="3">
    <location>
        <begin position="707"/>
        <end position="737"/>
    </location>
</feature>
<feature type="compositionally biased region" description="Low complexity" evidence="3">
    <location>
        <begin position="745"/>
        <end position="759"/>
    </location>
</feature>
<feature type="compositionally biased region" description="Pro residues" evidence="3">
    <location>
        <begin position="852"/>
        <end position="868"/>
    </location>
</feature>
<feature type="compositionally biased region" description="Gly residues" evidence="3">
    <location>
        <begin position="883"/>
        <end position="894"/>
    </location>
</feature>
<feature type="compositionally biased region" description="Gly residues" evidence="3">
    <location>
        <begin position="931"/>
        <end position="945"/>
    </location>
</feature>
<feature type="compositionally biased region" description="Polar residues" evidence="3">
    <location>
        <begin position="961"/>
        <end position="970"/>
    </location>
</feature>
<feature type="glycosylation site" description="N-linked (GlcNAc...) asparagine" evidence="2">
    <location>
        <position position="27"/>
    </location>
</feature>
<feature type="glycosylation site" description="N-linked (GlcNAc...) asparagine" evidence="2">
    <location>
        <position position="34"/>
    </location>
</feature>
<feature type="glycosylation site" description="N-linked (GlcNAc...) asparagine" evidence="2">
    <location>
        <position position="136"/>
    </location>
</feature>
<feature type="glycosylation site" description="N-linked (GlcNAc...) asparagine" evidence="2">
    <location>
        <position position="166"/>
    </location>
</feature>
<feature type="glycosylation site" description="N-linked (GlcNAc...) asparagine" evidence="2">
    <location>
        <position position="183"/>
    </location>
</feature>
<feature type="glycosylation site" description="N-linked (GlcNAc...) asparagine" evidence="2">
    <location>
        <position position="359"/>
    </location>
</feature>
<gene>
    <name type="primary">tty</name>
    <name type="ORF">CG1693</name>
</gene>
<sequence length="970" mass="105828">MGDYHEFTDQYKVPVIAKLLHALPHYNITFHKINSTFRPNDEIYLESLGILGSVPAALLIVSLLGLLFYLMTRCCDRKPRPAHSITSLKVALSIVTVMCCAAIGLGLYGNDDLHNGLLEVLTAGRKVDNLVTTIRNQTHILENTLTNRIRPQLVELADIFDQPVSNQTALSKLFVSLNIVQGNVTLATNAASDIRRPLMGISMTHFLTRGDQWELIRWPGTVATLALLLVLCAVLLVGVARHSRCALILFSVCGLLAVTGSWLMSGLYLSSSVAVGDLCISPADFLVSTAPRDLPTNVLLHYTQCEPGHTNPFTQRLRESQNSLNNARSAMATVMKISLVLFKSSGLQPKLGAVNADLNSSERLLTQLTALVDCKAVHHNFLAAARGLCEGGLLGLVLMLIASFIAAILLTIMVWVDSHTWIYIRKRNDYAQVDEPSYISHPAPQNHQQMMNAARTLPRNHNGHFSPPVISGSHTLQHPSKRQQHEMMAHAHIQQNMRAMGTHTLGRLPSHNHSPTHMTGPNNAAAVAAAANAAANMPPTTQAAQQQQQQQAQQQQQQAQQQLGGPQPIYCHHPHQHPHPHPHQHPHSHSAAAVAAAVQHQHAIYHQQQAQQYGTYTTAAHHAPHHLGPGQSQIYQQIPAHLAPQLAANGNPHSIYQPLVAVSQGSIYVSNMATMRRQNSQGGPQIPAHQHPPSLHQQQQQPPPPSQQQQQLHQLKSPQQHQQQLQQHQQQQQQQHHQQQHHQQQHQQQQQQHHQQQQPNESDVVPISTAMDTAIYDRDKQIYKCSTLRQGGKFDPKYKPSILNCPLPEIPKDAEQPKVESIYEQRQQAHHQNYSKTLQRPPMMLPPQMKAIPPPRIGTPTSPPPPVAQPLNESNGGVPSGLQNGGAVVGGGGANANEDTSLPPPPLEAQTEATKARMGAGPAANGKVLHNGGGGGSVGGGGGGAVDDDDDLPPPPPAITDESNYAVTEL</sequence>
<evidence type="ECO:0000250" key="1"/>
<evidence type="ECO:0000255" key="2"/>
<evidence type="ECO:0000256" key="3">
    <source>
        <dbReference type="SAM" id="MobiDB-lite"/>
    </source>
</evidence>
<evidence type="ECO:0000269" key="4">
    <source>
    </source>
</evidence>
<evidence type="ECO:0000305" key="5"/>
<organism>
    <name type="scientific">Drosophila melanogaster</name>
    <name type="common">Fruit fly</name>
    <dbReference type="NCBI Taxonomy" id="7227"/>
    <lineage>
        <taxon>Eukaryota</taxon>
        <taxon>Metazoa</taxon>
        <taxon>Ecdysozoa</taxon>
        <taxon>Arthropoda</taxon>
        <taxon>Hexapoda</taxon>
        <taxon>Insecta</taxon>
        <taxon>Pterygota</taxon>
        <taxon>Neoptera</taxon>
        <taxon>Endopterygota</taxon>
        <taxon>Diptera</taxon>
        <taxon>Brachycera</taxon>
        <taxon>Muscomorpha</taxon>
        <taxon>Ephydroidea</taxon>
        <taxon>Drosophilidae</taxon>
        <taxon>Drosophila</taxon>
        <taxon>Sophophora</taxon>
    </lineage>
</organism>